<sequence length="610" mass="68599">MPSALAFVLLVLNISLLKGQSPPGKPEIHKCRSPDKETFTCWWNPGTDGGLPTNYSLTYSKEGEKTTYECPDYKTSGPNSCFFSKQYTSIWKIYIITVNATNQMGSSSSDPLYVDVTYIVEPEPPRNLTLEVKQLKDKKTYLWVKWSPPTITDVKTGWFTMEYEIRLKPEEAEEWEIHFTGHQTQFKVFDLYPGQKYLVQTRCKPDHGYWSRWSQESSVEMPNDFTLKDTTVWIIVAILSAVICLIMVWAVALKGYSMMTCIFPPVPGPKIKGFDTHLLEKGKSEELLSALGCQDFPPTSDCEDLLVEFLEVDDNEDERLMPSHSKEYPGQGVKPTHLDPDSDSGHGSYDSHSLLSEKCEEPQAYPPTLHIPEITEKPENPEANIPPTVDPQSTNPNFHVDAPKSSTWPLLPGQHMPRSPYHSVADVCKLAGSPVNTLDSFLDKAEENVLKLSKALETGEEEVAEQKGAKSFPSDKQNTPWPLLQEKSPTVYVKPPDYVEIHKVNKDGVLSLFPKQRENNQTEKPGVPETSKEYAKVSGITDNNILVLVPDSRAQNTALLEESAKKAPPSFEADQSEKDLASFTATSSNRRLQLGRLDYLDPTCFMHSFH</sequence>
<name>PRLR_RAT</name>
<accession>P05710</accession>
<accession>Q62832</accession>
<accession>Q63451</accession>
<accession>Q63479</accession>
<accession>Q63723</accession>
<accession>Q64274</accession>
<organism>
    <name type="scientific">Rattus norvegicus</name>
    <name type="common">Rat</name>
    <dbReference type="NCBI Taxonomy" id="10116"/>
    <lineage>
        <taxon>Eukaryota</taxon>
        <taxon>Metazoa</taxon>
        <taxon>Chordata</taxon>
        <taxon>Craniata</taxon>
        <taxon>Vertebrata</taxon>
        <taxon>Euteleostomi</taxon>
        <taxon>Mammalia</taxon>
        <taxon>Eutheria</taxon>
        <taxon>Euarchontoglires</taxon>
        <taxon>Glires</taxon>
        <taxon>Rodentia</taxon>
        <taxon>Myomorpha</taxon>
        <taxon>Muroidea</taxon>
        <taxon>Muridae</taxon>
        <taxon>Murinae</taxon>
        <taxon>Rattus</taxon>
    </lineage>
</organism>
<feature type="signal peptide" evidence="2">
    <location>
        <begin position="1"/>
        <end position="19"/>
    </location>
</feature>
<feature type="chain" id="PRO_0000010981" description="Prolactin receptor">
    <location>
        <begin position="20"/>
        <end position="610"/>
    </location>
</feature>
<feature type="topological domain" description="Extracellular" evidence="1">
    <location>
        <begin position="20"/>
        <end position="229"/>
    </location>
</feature>
<feature type="transmembrane region" description="Helical" evidence="1">
    <location>
        <begin position="230"/>
        <end position="253"/>
    </location>
</feature>
<feature type="topological domain" description="Cytoplasmic" evidence="1">
    <location>
        <begin position="254"/>
        <end position="610"/>
    </location>
</feature>
<feature type="domain" description="Fibronectin type-III 1" evidence="3">
    <location>
        <begin position="22"/>
        <end position="122"/>
    </location>
</feature>
<feature type="domain" description="Fibronectin type-III 2" evidence="3">
    <location>
        <begin position="124"/>
        <end position="224"/>
    </location>
</feature>
<feature type="region of interest" description="Disordered" evidence="4">
    <location>
        <begin position="317"/>
        <end position="355"/>
    </location>
</feature>
<feature type="region of interest" description="Disordered" evidence="4">
    <location>
        <begin position="458"/>
        <end position="482"/>
    </location>
</feature>
<feature type="region of interest" description="Disordered" evidence="4">
    <location>
        <begin position="564"/>
        <end position="584"/>
    </location>
</feature>
<feature type="short sequence motif" description="WSXWS motif">
    <location>
        <begin position="210"/>
        <end position="214"/>
    </location>
</feature>
<feature type="short sequence motif" description="Box 1 motif">
    <location>
        <begin position="262"/>
        <end position="270"/>
    </location>
</feature>
<feature type="compositionally biased region" description="Basic and acidic residues" evidence="4">
    <location>
        <begin position="318"/>
        <end position="327"/>
    </location>
</feature>
<feature type="compositionally biased region" description="Low complexity" evidence="4">
    <location>
        <begin position="345"/>
        <end position="354"/>
    </location>
</feature>
<feature type="binding site" evidence="1">
    <location>
        <position position="206"/>
    </location>
    <ligand>
        <name>Zn(2+)</name>
        <dbReference type="ChEBI" id="CHEBI:29105"/>
    </ligand>
</feature>
<feature type="binding site" evidence="1">
    <location>
        <position position="207"/>
    </location>
    <ligand>
        <name>Zn(2+)</name>
        <dbReference type="ChEBI" id="CHEBI:29105"/>
    </ligand>
</feature>
<feature type="glycosylation site" description="N-linked (GlcNAc...) asparagine">
    <location>
        <position position="54"/>
    </location>
</feature>
<feature type="glycosylation site" description="N-linked (GlcNAc...) asparagine">
    <location>
        <position position="99"/>
    </location>
</feature>
<feature type="glycosylation site" description="N-linked (GlcNAc...) asparagine" evidence="2">
    <location>
        <position position="127"/>
    </location>
</feature>
<feature type="disulfide bond" evidence="5">
    <location>
        <begin position="31"/>
        <end position="41"/>
    </location>
</feature>
<feature type="disulfide bond" evidence="5">
    <location>
        <begin position="70"/>
        <end position="81"/>
    </location>
</feature>
<feature type="splice variant" id="VSP_001725" description="In isoform 2." evidence="7">
    <original>EVKQLKDKKTYLWVKWSPPT</original>
    <variation>DYRWEVSCHQEALPKSAKLN</variation>
    <location>
        <begin position="131"/>
        <end position="150"/>
    </location>
</feature>
<feature type="splice variant" id="VSP_001726" description="In isoform 2." evidence="7">
    <location>
        <begin position="151"/>
        <end position="610"/>
    </location>
</feature>
<feature type="splice variant" id="VSP_001727" description="In isoform 3." evidence="8">
    <original>KGKSEELLSALGCQDFPPTSDCEDLLVEFL</original>
    <variation>TGSPSKYKVDLYLALPGGFQKLDNAGELDY</variation>
    <location>
        <begin position="281"/>
        <end position="310"/>
    </location>
</feature>
<feature type="splice variant" id="VSP_001728" description="In isoform 3." evidence="8">
    <location>
        <begin position="311"/>
        <end position="610"/>
    </location>
</feature>
<feature type="splice variant" id="VSP_001729" description="In isoform 4." evidence="6 9">
    <location>
        <begin position="342"/>
        <end position="539"/>
    </location>
</feature>
<feature type="sequence conflict" description="In Ref. 2; AAA79273." evidence="10" ref="2">
    <original>V</original>
    <variation>A</variation>
    <location>
        <position position="236"/>
    </location>
</feature>
<feature type="sequence conflict" description="In Ref. 2; AAA79273." evidence="10" ref="2">
    <original>G</original>
    <variation>V</variation>
    <location>
        <position position="345"/>
    </location>
</feature>
<feature type="sequence conflict" description="In Ref. 1; AAA41938." evidence="10" ref="1">
    <original>E</original>
    <variation>K</variation>
    <location>
        <position position="465"/>
    </location>
</feature>
<feature type="sequence conflict" description="In Ref. 2; AAA79273." evidence="10" ref="2">
    <original>Q</original>
    <variation>E</variation>
    <location>
        <position position="466"/>
    </location>
</feature>
<feature type="sequence conflict" description="In Ref. 2; AAA79273." evidence="10" ref="2">
    <original>A</original>
    <variation>G</variation>
    <location>
        <position position="469"/>
    </location>
</feature>
<feature type="sequence conflict" description="In Ref. 1; AAA41938." evidence="10" ref="1">
    <original>T</original>
    <variation>M</variation>
    <location>
        <position position="541"/>
    </location>
</feature>
<feature type="sequence conflict" description="In Ref. 2; AAA79273." evidence="10" ref="2">
    <original>Q</original>
    <variation>K</variation>
    <location>
        <position position="555"/>
    </location>
</feature>
<feature type="strand" evidence="11">
    <location>
        <begin position="27"/>
        <end position="37"/>
    </location>
</feature>
<feature type="strand" evidence="11">
    <location>
        <begin position="39"/>
        <end position="44"/>
    </location>
</feature>
<feature type="strand" evidence="11">
    <location>
        <begin position="54"/>
        <end position="61"/>
    </location>
</feature>
<feature type="strand" evidence="11">
    <location>
        <begin position="64"/>
        <end position="69"/>
    </location>
</feature>
<feature type="strand" evidence="11">
    <location>
        <begin position="80"/>
        <end position="83"/>
    </location>
</feature>
<feature type="turn" evidence="11">
    <location>
        <begin position="85"/>
        <end position="87"/>
    </location>
</feature>
<feature type="strand" evidence="11">
    <location>
        <begin position="93"/>
        <end position="102"/>
    </location>
</feature>
<feature type="strand" evidence="11">
    <location>
        <begin position="105"/>
        <end position="108"/>
    </location>
</feature>
<feature type="strand" evidence="11">
    <location>
        <begin position="112"/>
        <end position="115"/>
    </location>
</feature>
<feature type="helix" evidence="11">
    <location>
        <begin position="116"/>
        <end position="118"/>
    </location>
</feature>
<feature type="strand" evidence="11">
    <location>
        <begin position="126"/>
        <end position="132"/>
    </location>
</feature>
<feature type="strand" evidence="11">
    <location>
        <begin position="142"/>
        <end position="147"/>
    </location>
</feature>
<feature type="strand" evidence="12">
    <location>
        <begin position="150"/>
        <end position="152"/>
    </location>
</feature>
<feature type="turn" evidence="11">
    <location>
        <begin position="154"/>
        <end position="157"/>
    </location>
</feature>
<feature type="strand" evidence="11">
    <location>
        <begin position="161"/>
        <end position="171"/>
    </location>
</feature>
<feature type="strand" evidence="11">
    <location>
        <begin position="176"/>
        <end position="181"/>
    </location>
</feature>
<feature type="strand" evidence="11">
    <location>
        <begin position="184"/>
        <end position="188"/>
    </location>
</feature>
<feature type="strand" evidence="11">
    <location>
        <begin position="196"/>
        <end position="208"/>
    </location>
</feature>
<feature type="strand" evidence="11">
    <location>
        <begin position="217"/>
        <end position="220"/>
    </location>
</feature>
<protein>
    <recommendedName>
        <fullName>Prolactin receptor</fullName>
        <shortName>PRL-R</shortName>
    </recommendedName>
    <alternativeName>
        <fullName>Lactogen receptor</fullName>
    </alternativeName>
</protein>
<dbReference type="EMBL" id="M57668">
    <property type="protein sequence ID" value="AAA41938.1"/>
    <property type="molecule type" value="mRNA"/>
</dbReference>
<dbReference type="EMBL" id="M34083">
    <property type="protein sequence ID" value="AAA79273.1"/>
    <property type="molecule type" value="mRNA"/>
</dbReference>
<dbReference type="EMBL" id="L48060">
    <property type="protein sequence ID" value="AAA79274.1"/>
    <property type="molecule type" value="mRNA"/>
</dbReference>
<dbReference type="EMBL" id="U34730">
    <property type="protein sequence ID" value="AAA92053.1"/>
    <property type="molecule type" value="Genomic_DNA"/>
</dbReference>
<dbReference type="EMBL" id="M19304">
    <property type="protein sequence ID" value="AAA41937.1"/>
    <property type="molecule type" value="mRNA"/>
</dbReference>
<dbReference type="EMBL" id="M74152">
    <property type="protein sequence ID" value="AAA41946.1"/>
    <property type="molecule type" value="mRNA"/>
</dbReference>
<dbReference type="EMBL" id="U07567">
    <property type="protein sequence ID" value="AAA61784.1"/>
    <property type="molecule type" value="mRNA"/>
</dbReference>
<dbReference type="PIR" id="A29884">
    <property type="entry name" value="A29884"/>
</dbReference>
<dbReference type="PIR" id="A34631">
    <property type="entry name" value="A34631"/>
</dbReference>
<dbReference type="PIR" id="A36116">
    <property type="entry name" value="A36116"/>
</dbReference>
<dbReference type="PIR" id="A41070">
    <property type="entry name" value="A41070"/>
</dbReference>
<dbReference type="PIR" id="B34631">
    <property type="entry name" value="B34631"/>
</dbReference>
<dbReference type="RefSeq" id="NP_001029283.1">
    <property type="nucleotide sequence ID" value="NM_001034111.1"/>
</dbReference>
<dbReference type="RefSeq" id="NP_036762.1">
    <molecule id="P05710-3"/>
    <property type="nucleotide sequence ID" value="NM_012630.2"/>
</dbReference>
<dbReference type="RefSeq" id="XP_038957680.1">
    <molecule id="P05710-3"/>
    <property type="nucleotide sequence ID" value="XM_039101752.2"/>
</dbReference>
<dbReference type="RefSeq" id="XP_038957681.1">
    <molecule id="P05710-3"/>
    <property type="nucleotide sequence ID" value="XM_039101753.2"/>
</dbReference>
<dbReference type="RefSeq" id="XP_063137384.1">
    <molecule id="P05710-3"/>
    <property type="nucleotide sequence ID" value="XM_063281314.1"/>
</dbReference>
<dbReference type="RefSeq" id="XP_063137385.1">
    <molecule id="P05710-3"/>
    <property type="nucleotide sequence ID" value="XM_063281315.1"/>
</dbReference>
<dbReference type="PDB" id="1F6F">
    <property type="method" value="X-ray"/>
    <property type="resolution" value="2.30 A"/>
    <property type="chains" value="B/C=20-229"/>
</dbReference>
<dbReference type="PDB" id="3EW3">
    <property type="method" value="X-ray"/>
    <property type="resolution" value="3.80 A"/>
    <property type="chains" value="B/C=20-229"/>
</dbReference>
<dbReference type="PDB" id="3NPZ">
    <property type="method" value="X-ray"/>
    <property type="resolution" value="3.35 A"/>
    <property type="chains" value="B/C=20-229"/>
</dbReference>
<dbReference type="PDBsum" id="1F6F"/>
<dbReference type="PDBsum" id="3EW3"/>
<dbReference type="PDBsum" id="3NPZ"/>
<dbReference type="SMR" id="P05710"/>
<dbReference type="BioGRID" id="246816">
    <property type="interactions" value="1"/>
</dbReference>
<dbReference type="FunCoup" id="P05710">
    <property type="interactions" value="448"/>
</dbReference>
<dbReference type="MINT" id="P05710"/>
<dbReference type="STRING" id="10116.ENSRNOP00000072948"/>
<dbReference type="GlyCosmos" id="P05710">
    <property type="glycosylation" value="3 sites, No reported glycans"/>
</dbReference>
<dbReference type="GlyGen" id="P05710">
    <property type="glycosylation" value="4 sites"/>
</dbReference>
<dbReference type="iPTMnet" id="P05710"/>
<dbReference type="PhosphoSitePlus" id="P05710"/>
<dbReference type="PaxDb" id="10116-ENSRNOP00000056718"/>
<dbReference type="Ensembl" id="ENSRNOT00000080786.2">
    <molecule id="P05710-1"/>
    <property type="protein sequence ID" value="ENSRNOP00000072948.2"/>
    <property type="gene ID" value="ENSRNOG00000057557.2"/>
</dbReference>
<dbReference type="Ensembl" id="ENSRNOT00000080974.2">
    <molecule id="P05710-3"/>
    <property type="protein sequence ID" value="ENSRNOP00000074428.2"/>
    <property type="gene ID" value="ENSRNOG00000057557.2"/>
</dbReference>
<dbReference type="GeneID" id="24684"/>
<dbReference type="KEGG" id="rno:24684"/>
<dbReference type="AGR" id="RGD:3407"/>
<dbReference type="CTD" id="5618"/>
<dbReference type="RGD" id="3407">
    <property type="gene designation" value="Prlr"/>
</dbReference>
<dbReference type="eggNOG" id="ENOG502R22A">
    <property type="taxonomic scope" value="Eukaryota"/>
</dbReference>
<dbReference type="GeneTree" id="ENSGT00940000154851"/>
<dbReference type="InParanoid" id="P05710"/>
<dbReference type="OMA" id="ANITCTW"/>
<dbReference type="OrthoDB" id="8858139at2759"/>
<dbReference type="PhylomeDB" id="P05710"/>
<dbReference type="Reactome" id="R-RNO-1170546">
    <property type="pathway name" value="Prolactin receptor signaling"/>
</dbReference>
<dbReference type="Reactome" id="R-RNO-982772">
    <property type="pathway name" value="Growth hormone receptor signaling"/>
</dbReference>
<dbReference type="EvolutionaryTrace" id="P05710"/>
<dbReference type="PRO" id="PR:P05710"/>
<dbReference type="Proteomes" id="UP000002494">
    <property type="component" value="Chromosome 2"/>
</dbReference>
<dbReference type="GO" id="GO:0009986">
    <property type="term" value="C:cell surface"/>
    <property type="evidence" value="ECO:0000266"/>
    <property type="project" value="RGD"/>
</dbReference>
<dbReference type="GO" id="GO:0009897">
    <property type="term" value="C:external side of plasma membrane"/>
    <property type="evidence" value="ECO:0000318"/>
    <property type="project" value="GO_Central"/>
</dbReference>
<dbReference type="GO" id="GO:0005886">
    <property type="term" value="C:plasma membrane"/>
    <property type="evidence" value="ECO:0000304"/>
    <property type="project" value="Reactome"/>
</dbReference>
<dbReference type="GO" id="GO:0043235">
    <property type="term" value="C:receptor complex"/>
    <property type="evidence" value="ECO:0000318"/>
    <property type="project" value="GO_Central"/>
</dbReference>
<dbReference type="GO" id="GO:0019955">
    <property type="term" value="F:cytokine binding"/>
    <property type="evidence" value="ECO:0000318"/>
    <property type="project" value="GO_Central"/>
</dbReference>
<dbReference type="GO" id="GO:0008289">
    <property type="term" value="F:lipid binding"/>
    <property type="evidence" value="ECO:0000266"/>
    <property type="project" value="RGD"/>
</dbReference>
<dbReference type="GO" id="GO:0046872">
    <property type="term" value="F:metal ion binding"/>
    <property type="evidence" value="ECO:0007669"/>
    <property type="project" value="UniProtKB-KW"/>
</dbReference>
<dbReference type="GO" id="GO:0017046">
    <property type="term" value="F:peptide hormone binding"/>
    <property type="evidence" value="ECO:0000266"/>
    <property type="project" value="RGD"/>
</dbReference>
<dbReference type="GO" id="GO:0004925">
    <property type="term" value="F:prolactin receptor activity"/>
    <property type="evidence" value="ECO:0000315"/>
    <property type="project" value="RGD"/>
</dbReference>
<dbReference type="GO" id="GO:0019901">
    <property type="term" value="F:protein kinase binding"/>
    <property type="evidence" value="ECO:0000353"/>
    <property type="project" value="RGD"/>
</dbReference>
<dbReference type="GO" id="GO:0007259">
    <property type="term" value="P:cell surface receptor signaling pathway via JAK-STAT"/>
    <property type="evidence" value="ECO:0000266"/>
    <property type="project" value="RGD"/>
</dbReference>
<dbReference type="GO" id="GO:0097011">
    <property type="term" value="P:cellular response to granulocyte macrophage colony-stimulating factor stimulus"/>
    <property type="evidence" value="ECO:0000315"/>
    <property type="project" value="RGD"/>
</dbReference>
<dbReference type="GO" id="GO:0019221">
    <property type="term" value="P:cytokine-mediated signaling pathway"/>
    <property type="evidence" value="ECO:0000318"/>
    <property type="project" value="GO_Central"/>
</dbReference>
<dbReference type="GO" id="GO:0007595">
    <property type="term" value="P:lactation"/>
    <property type="evidence" value="ECO:0000266"/>
    <property type="project" value="RGD"/>
</dbReference>
<dbReference type="GO" id="GO:0060749">
    <property type="term" value="P:mammary gland alveolus development"/>
    <property type="evidence" value="ECO:0000266"/>
    <property type="project" value="RGD"/>
</dbReference>
<dbReference type="GO" id="GO:0060644">
    <property type="term" value="P:mammary gland epithelial cell differentiation"/>
    <property type="evidence" value="ECO:0000266"/>
    <property type="project" value="RGD"/>
</dbReference>
<dbReference type="GO" id="GO:0061180">
    <property type="term" value="P:mammary gland epithelium development"/>
    <property type="evidence" value="ECO:0000266"/>
    <property type="project" value="RGD"/>
</dbReference>
<dbReference type="GO" id="GO:0043066">
    <property type="term" value="P:negative regulation of apoptotic process"/>
    <property type="evidence" value="ECO:0000266"/>
    <property type="project" value="RGD"/>
</dbReference>
<dbReference type="GO" id="GO:0030890">
    <property type="term" value="P:positive regulation of B cell proliferation"/>
    <property type="evidence" value="ECO:0000315"/>
    <property type="project" value="RGD"/>
</dbReference>
<dbReference type="GO" id="GO:0008284">
    <property type="term" value="P:positive regulation of cell population proliferation"/>
    <property type="evidence" value="ECO:0000318"/>
    <property type="project" value="GO_Central"/>
</dbReference>
<dbReference type="GO" id="GO:0120162">
    <property type="term" value="P:positive regulation of cold-induced thermogenesis"/>
    <property type="evidence" value="ECO:0000250"/>
    <property type="project" value="YuBioLab"/>
</dbReference>
<dbReference type="GO" id="GO:0060736">
    <property type="term" value="P:prostate gland growth"/>
    <property type="evidence" value="ECO:0000266"/>
    <property type="project" value="RGD"/>
</dbReference>
<dbReference type="GO" id="GO:0030155">
    <property type="term" value="P:regulation of cell adhesion"/>
    <property type="evidence" value="ECO:0000266"/>
    <property type="project" value="RGD"/>
</dbReference>
<dbReference type="GO" id="GO:0030856">
    <property type="term" value="P:regulation of epithelial cell differentiation"/>
    <property type="evidence" value="ECO:0000266"/>
    <property type="project" value="RGD"/>
</dbReference>
<dbReference type="GO" id="GO:0009617">
    <property type="term" value="P:response to bacterium"/>
    <property type="evidence" value="ECO:0000266"/>
    <property type="project" value="RGD"/>
</dbReference>
<dbReference type="CDD" id="cd00063">
    <property type="entry name" value="FN3"/>
    <property type="match status" value="1"/>
</dbReference>
<dbReference type="FunFam" id="2.60.40.10:FF:000287">
    <property type="entry name" value="Prolactin receptor"/>
    <property type="match status" value="1"/>
</dbReference>
<dbReference type="FunFam" id="2.60.40.10:FF:000358">
    <property type="entry name" value="Prolactin receptor"/>
    <property type="match status" value="1"/>
</dbReference>
<dbReference type="Gene3D" id="2.60.40.10">
    <property type="entry name" value="Immunoglobulins"/>
    <property type="match status" value="2"/>
</dbReference>
<dbReference type="InterPro" id="IPR003961">
    <property type="entry name" value="FN3_dom"/>
</dbReference>
<dbReference type="InterPro" id="IPR036116">
    <property type="entry name" value="FN3_sf"/>
</dbReference>
<dbReference type="InterPro" id="IPR015152">
    <property type="entry name" value="Growth/epo_recpt_lig-bind"/>
</dbReference>
<dbReference type="InterPro" id="IPR013783">
    <property type="entry name" value="Ig-like_fold"/>
</dbReference>
<dbReference type="InterPro" id="IPR003528">
    <property type="entry name" value="Long_hematopoietin_rcpt_CS"/>
</dbReference>
<dbReference type="InterPro" id="IPR050379">
    <property type="entry name" value="Type-I_Cytokine_Rcpt"/>
</dbReference>
<dbReference type="PANTHER" id="PTHR23036">
    <property type="entry name" value="CYTOKINE RECEPTOR"/>
    <property type="match status" value="1"/>
</dbReference>
<dbReference type="PANTHER" id="PTHR23036:SF86">
    <property type="entry name" value="PROLACTIN RECEPTOR"/>
    <property type="match status" value="1"/>
</dbReference>
<dbReference type="Pfam" id="PF09067">
    <property type="entry name" value="EpoR_lig-bind"/>
    <property type="match status" value="1"/>
</dbReference>
<dbReference type="Pfam" id="PF00041">
    <property type="entry name" value="fn3"/>
    <property type="match status" value="1"/>
</dbReference>
<dbReference type="SMART" id="SM00060">
    <property type="entry name" value="FN3"/>
    <property type="match status" value="2"/>
</dbReference>
<dbReference type="SUPFAM" id="SSF49265">
    <property type="entry name" value="Fibronectin type III"/>
    <property type="match status" value="2"/>
</dbReference>
<dbReference type="PROSITE" id="PS50853">
    <property type="entry name" value="FN3"/>
    <property type="match status" value="2"/>
</dbReference>
<dbReference type="PROSITE" id="PS01352">
    <property type="entry name" value="HEMATOPO_REC_L_F1"/>
    <property type="match status" value="1"/>
</dbReference>
<comment type="function">
    <text>This is a receptor for the anterior pituitary hormone prolactin.</text>
</comment>
<comment type="subunit">
    <text evidence="1">Interacts with SMARCA1. Interacts with NEK3 and VAV2 and this interaction is prolactin-dependent.</text>
</comment>
<comment type="subcellular location">
    <subcellularLocation>
        <location>Membrane</location>
        <topology>Single-pass type I membrane protein</topology>
    </subcellularLocation>
</comment>
<comment type="alternative products">
    <event type="alternative splicing"/>
    <isoform>
        <id>P05710-1</id>
        <name>1</name>
        <name>Long</name>
        <sequence type="displayed"/>
    </isoform>
    <isoform>
        <id>P05710-2</id>
        <name>2</name>
        <name>Short</name>
        <sequence type="described" ref="VSP_001725 VSP_001726"/>
    </isoform>
    <isoform>
        <id>P05710-3</id>
        <name>3</name>
        <name>Medium</name>
        <sequence type="described" ref="VSP_001727 VSP_001728"/>
    </isoform>
    <isoform>
        <id>P05710-4</id>
        <name>4</name>
        <name>NB2</name>
        <sequence type="described" ref="VSP_001729"/>
    </isoform>
</comment>
<comment type="domain">
    <text>The WSXWS motif appears to be necessary for proper protein folding and thereby efficient intracellular transport and cell-surface receptor binding.</text>
</comment>
<comment type="domain">
    <text>The box 1 motif is required for JAK interaction and/or activation.</text>
</comment>
<comment type="similarity">
    <text evidence="10">Belongs to the type I cytokine receptor family. Type 1 subfamily.</text>
</comment>
<keyword id="KW-0002">3D-structure</keyword>
<keyword id="KW-0025">Alternative splicing</keyword>
<keyword id="KW-0903">Direct protein sequencing</keyword>
<keyword id="KW-1015">Disulfide bond</keyword>
<keyword id="KW-0325">Glycoprotein</keyword>
<keyword id="KW-0472">Membrane</keyword>
<keyword id="KW-0479">Metal-binding</keyword>
<keyword id="KW-0675">Receptor</keyword>
<keyword id="KW-1185">Reference proteome</keyword>
<keyword id="KW-0677">Repeat</keyword>
<keyword id="KW-0732">Signal</keyword>
<keyword id="KW-0812">Transmembrane</keyword>
<keyword id="KW-1133">Transmembrane helix</keyword>
<keyword id="KW-0862">Zinc</keyword>
<proteinExistence type="evidence at protein level"/>
<gene>
    <name type="primary">Prlr</name>
</gene>
<evidence type="ECO:0000250" key="1"/>
<evidence type="ECO:0000255" key="2"/>
<evidence type="ECO:0000255" key="3">
    <source>
        <dbReference type="PROSITE-ProRule" id="PRU00316"/>
    </source>
</evidence>
<evidence type="ECO:0000256" key="4">
    <source>
        <dbReference type="SAM" id="MobiDB-lite"/>
    </source>
</evidence>
<evidence type="ECO:0000269" key="5">
    <source>
    </source>
</evidence>
<evidence type="ECO:0000303" key="6">
    <source>
    </source>
</evidence>
<evidence type="ECO:0000303" key="7">
    <source>
    </source>
</evidence>
<evidence type="ECO:0000303" key="8">
    <source>
    </source>
</evidence>
<evidence type="ECO:0000303" key="9">
    <source>
    </source>
</evidence>
<evidence type="ECO:0000305" key="10"/>
<evidence type="ECO:0007829" key="11">
    <source>
        <dbReference type="PDB" id="1F6F"/>
    </source>
</evidence>
<evidence type="ECO:0007829" key="12">
    <source>
        <dbReference type="PDB" id="3NPZ"/>
    </source>
</evidence>
<reference key="1">
    <citation type="journal article" date="1990" name="Mol. Endocrinol.">
        <title>Expression of two forms of prolactin receptor in rat ovary and liver.</title>
        <authorList>
            <person name="Shirota M."/>
            <person name="Banville D."/>
            <person name="Ali S."/>
            <person name="Jolicoeur C."/>
            <person name="Boutin J.-M."/>
            <person name="Edery M."/>
            <person name="Djiane J."/>
            <person name="Kelly P.A."/>
        </authorList>
    </citation>
    <scope>NUCLEOTIDE SEQUENCE [MRNA] (ISOFORM 1)</scope>
</reference>
<reference key="2">
    <citation type="journal article" date="1990" name="Biochem. Biophys. Res. Commun.">
        <title>Isolation and characterization of two novel rat ovarian lactogen receptor cDNA species.</title>
        <authorList>
            <person name="Zhang R."/>
            <person name="Buczko E."/>
            <person name="Tsai-Morris C.-H."/>
            <person name="Hu Z.Z."/>
            <person name="Dufau M.L."/>
        </authorList>
    </citation>
    <scope>NUCLEOTIDE SEQUENCE [MRNA] (ISOFORMS 1 AND 2)</scope>
    <source>
        <strain>Sprague-Dawley</strain>
        <tissue>Ovary</tissue>
    </source>
</reference>
<reference key="3">
    <citation type="submission" date="1996-03" db="EMBL/GenBank/DDBJ databases">
        <authorList>
            <person name="Banville D."/>
            <person name="Stocco R."/>
            <person name="Murthy K.K."/>
            <person name="Boie Y."/>
            <person name="Kelly P.A."/>
        </authorList>
    </citation>
    <scope>NUCLEOTIDE SEQUENCE OF 281-610</scope>
</reference>
<reference key="4">
    <citation type="journal article" date="1988" name="Cell">
        <title>Cloning and expression of the rat prolactin receptor, a member of the growth hormone/prolactin receptor gene family.</title>
        <authorList>
            <person name="Boutin J.-M."/>
            <person name="Jolicoeur C."/>
            <person name="Okamura H."/>
            <person name="Gagnon J."/>
            <person name="Edery M."/>
            <person name="Shirota M."/>
            <person name="Banville D."/>
            <person name="Dusanter-Fourt I."/>
            <person name="Djiane J."/>
            <person name="Kelly P.A."/>
        </authorList>
    </citation>
    <scope>NUCLEOTIDE SEQUENCE [MRNA] (ISOFORM 3)</scope>
    <scope>PARTIAL PROTEIN SEQUENCE</scope>
    <source>
        <tissue>Liver</tissue>
    </source>
</reference>
<reference key="5">
    <citation type="journal article" date="1991" name="J. Biol. Chem.">
        <title>A prolactin-dependent immune cell line (Nb2) expresses a mutant form of prolactin receptor.</title>
        <authorList>
            <person name="Ali S."/>
            <person name="Pelligrini I."/>
            <person name="Kelly P.A."/>
        </authorList>
    </citation>
    <scope>NUCLEOTIDE SEQUENCE [MRNA] (ISOFORM 4)</scope>
    <source>
        <tissue>Lymphoma</tissue>
    </source>
</reference>
<reference key="6">
    <citation type="journal article" date="1994" name="J. Biol. Chem.">
        <title>Differential signal transduction of the short, Nb2, and long prolactin receptors. Activation of interferon regulatory factor-1 and cell proliferation.</title>
        <authorList>
            <person name="O'Neal K.D."/>
            <person name="Yu-Lee L.Y."/>
        </authorList>
    </citation>
    <scope>NUCLEOTIDE SEQUENCE [MRNA] (ISOFORM 4)</scope>
</reference>
<reference key="7">
    <citation type="journal article" date="2000" name="Nat. Struct. Biol.">
        <title>Ternary complex between placental lactogen and the extracellular domain of the prolactin receptor.</title>
        <authorList>
            <person name="Elkins P.A."/>
            <person name="Christinger H.W."/>
            <person name="Sandowski Y."/>
            <person name="Sakal E."/>
            <person name="Gertler A."/>
            <person name="de Vos A.M."/>
            <person name="Kossiakoff A.A."/>
        </authorList>
    </citation>
    <scope>X-RAY CRYSTALLOGRAPHY (2.3 ANGSTROMS) OF 20-229 IN COMPLEX WITH PLACENTAL LACTOGEN</scope>
    <scope>DISULFIDE BONDS</scope>
</reference>